<organism>
    <name type="scientific">Oryza sativa subsp. japonica</name>
    <name type="common">Rice</name>
    <dbReference type="NCBI Taxonomy" id="39947"/>
    <lineage>
        <taxon>Eukaryota</taxon>
        <taxon>Viridiplantae</taxon>
        <taxon>Streptophyta</taxon>
        <taxon>Embryophyta</taxon>
        <taxon>Tracheophyta</taxon>
        <taxon>Spermatophyta</taxon>
        <taxon>Magnoliopsida</taxon>
        <taxon>Liliopsida</taxon>
        <taxon>Poales</taxon>
        <taxon>Poaceae</taxon>
        <taxon>BOP clade</taxon>
        <taxon>Oryzoideae</taxon>
        <taxon>Oryzeae</taxon>
        <taxon>Oryzinae</taxon>
        <taxon>Oryza</taxon>
        <taxon>Oryza sativa</taxon>
    </lineage>
</organism>
<proteinExistence type="evidence at transcript level"/>
<protein>
    <recommendedName>
        <fullName>Dolichyl-diphosphooligosaccharide--protein glycosyltransferase subunit STT3A</fullName>
        <shortName>Oligosaccharyl transferase subunit STT3A</shortName>
        <shortName>STT3-A</shortName>
        <ecNumber>2.4.99.18</ecNumber>
    </recommendedName>
    <alternativeName>
        <fullName>Protein STAUROSPORIN AND TEMPERATURE SENSITIVE 3-LIKE A</fullName>
    </alternativeName>
</protein>
<keyword id="KW-0256">Endoplasmic reticulum</keyword>
<keyword id="KW-0325">Glycoprotein</keyword>
<keyword id="KW-0328">Glycosyltransferase</keyword>
<keyword id="KW-0460">Magnesium</keyword>
<keyword id="KW-0464">Manganese</keyword>
<keyword id="KW-0472">Membrane</keyword>
<keyword id="KW-0479">Metal-binding</keyword>
<keyword id="KW-1185">Reference proteome</keyword>
<keyword id="KW-0808">Transferase</keyword>
<keyword id="KW-0812">Transmembrane</keyword>
<keyword id="KW-1133">Transmembrane helix</keyword>
<gene>
    <name type="primary">STT3A</name>
    <name type="ordered locus">Os05g0519900</name>
    <name type="ordered locus">LOC_Os05g44360</name>
    <name type="ORF">OsJ_19234</name>
    <name type="ORF">P0483D07.5</name>
    <name type="ORF">P0599F04.15</name>
</gene>
<feature type="chain" id="PRO_0000420538" description="Dolichyl-diphosphooligosaccharide--protein glycosyltransferase subunit STT3A">
    <location>
        <begin position="1"/>
        <end position="787"/>
    </location>
</feature>
<feature type="topological domain" description="Cytoplasmic" evidence="9">
    <location>
        <begin position="1"/>
        <end position="18"/>
    </location>
</feature>
<feature type="transmembrane region" description="Helical" evidence="6">
    <location>
        <begin position="19"/>
        <end position="39"/>
    </location>
</feature>
<feature type="topological domain" description="Lumenal" evidence="9">
    <location>
        <begin position="40"/>
        <end position="125"/>
    </location>
</feature>
<feature type="transmembrane region" description="Helical" evidence="3">
    <location>
        <begin position="126"/>
        <end position="144"/>
    </location>
</feature>
<feature type="topological domain" description="Cytoplasmic" evidence="9">
    <location>
        <begin position="145"/>
        <end position="146"/>
    </location>
</feature>
<feature type="transmembrane region" description="Helical" evidence="3">
    <location>
        <begin position="147"/>
        <end position="164"/>
    </location>
</feature>
<feature type="topological domain" description="Lumenal" evidence="9">
    <location>
        <begin position="165"/>
        <end position="175"/>
    </location>
</feature>
<feature type="transmembrane region" description="Helical" evidence="3">
    <location>
        <begin position="176"/>
        <end position="195"/>
    </location>
</feature>
<feature type="topological domain" description="Cytoplasmic" evidence="9">
    <location>
        <begin position="196"/>
        <end position="197"/>
    </location>
</feature>
<feature type="transmembrane region" description="Helical" evidence="3">
    <location>
        <begin position="198"/>
        <end position="212"/>
    </location>
</feature>
<feature type="topological domain" description="Lumenal" evidence="9">
    <location>
        <begin position="213"/>
        <end position="217"/>
    </location>
</feature>
<feature type="transmembrane region" description="Helical" evidence="3">
    <location>
        <begin position="218"/>
        <end position="234"/>
    </location>
</feature>
<feature type="topological domain" description="Cytoplasmic" evidence="9">
    <location>
        <begin position="235"/>
        <end position="239"/>
    </location>
</feature>
<feature type="transmembrane region" description="Helical" evidence="3">
    <location>
        <begin position="240"/>
        <end position="265"/>
    </location>
</feature>
<feature type="topological domain" description="Lumenal" evidence="9">
    <location>
        <begin position="266"/>
        <end position="273"/>
    </location>
</feature>
<feature type="transmembrane region" description="Helical" evidence="3">
    <location>
        <begin position="274"/>
        <end position="293"/>
    </location>
</feature>
<feature type="topological domain" description="Cytoplasmic" evidence="9">
    <location>
        <begin position="294"/>
        <end position="306"/>
    </location>
</feature>
<feature type="transmembrane region" description="Helical" evidence="6">
    <location>
        <begin position="307"/>
        <end position="327"/>
    </location>
</feature>
<feature type="topological domain" description="Lumenal" evidence="9">
    <location>
        <begin position="328"/>
        <end position="365"/>
    </location>
</feature>
<feature type="transmembrane region" description="Helical" evidence="3">
    <location>
        <begin position="366"/>
        <end position="388"/>
    </location>
</feature>
<feature type="topological domain" description="Cytoplasmic" evidence="9">
    <location>
        <begin position="389"/>
        <end position="394"/>
    </location>
</feature>
<feature type="transmembrane region" description="Helical" evidence="3">
    <location>
        <begin position="395"/>
        <end position="411"/>
    </location>
</feature>
<feature type="topological domain" description="Lumenal" evidence="9">
    <location>
        <begin position="412"/>
        <end position="415"/>
    </location>
</feature>
<feature type="transmembrane region" description="Helical" evidence="3">
    <location>
        <begin position="416"/>
        <end position="437"/>
    </location>
</feature>
<feature type="topological domain" description="Cytoplasmic" evidence="9">
    <location>
        <begin position="438"/>
        <end position="525"/>
    </location>
</feature>
<feature type="transmembrane region" description="Helical" evidence="6">
    <location>
        <begin position="526"/>
        <end position="546"/>
    </location>
</feature>
<feature type="topological domain" description="Lumenal" evidence="9">
    <location>
        <begin position="547"/>
        <end position="787"/>
    </location>
</feature>
<feature type="region of interest" description="Disordered" evidence="8">
    <location>
        <begin position="453"/>
        <end position="507"/>
    </location>
</feature>
<feature type="region of interest" description="Interacts with target acceptor peptide in protein substrate" evidence="2">
    <location>
        <begin position="592"/>
        <end position="594"/>
    </location>
</feature>
<feature type="region of interest" description="Disordered" evidence="8">
    <location>
        <begin position="759"/>
        <end position="787"/>
    </location>
</feature>
<feature type="short sequence motif" description="DXD motif 1" evidence="4">
    <location>
        <begin position="53"/>
        <end position="55"/>
    </location>
</feature>
<feature type="short sequence motif" description="DXD motif 2" evidence="3">
    <location>
        <begin position="173"/>
        <end position="175"/>
    </location>
</feature>
<feature type="short sequence motif" description="SVSE motif" evidence="4">
    <location>
        <begin position="357"/>
        <end position="360"/>
    </location>
</feature>
<feature type="short sequence motif" description="WWDYG motif" evidence="3">
    <location>
        <begin position="592"/>
        <end position="596"/>
    </location>
</feature>
<feature type="short sequence motif" description="DK motif" evidence="3">
    <location>
        <begin position="659"/>
        <end position="666"/>
    </location>
</feature>
<feature type="compositionally biased region" description="Low complexity" evidence="8">
    <location>
        <begin position="453"/>
        <end position="475"/>
    </location>
</feature>
<feature type="compositionally biased region" description="Basic and acidic residues" evidence="8">
    <location>
        <begin position="477"/>
        <end position="504"/>
    </location>
</feature>
<feature type="compositionally biased region" description="Basic residues" evidence="8">
    <location>
        <begin position="759"/>
        <end position="769"/>
    </location>
</feature>
<feature type="binding site" evidence="2">
    <location>
        <position position="55"/>
    </location>
    <ligand>
        <name>Mn(2+)</name>
        <dbReference type="ChEBI" id="CHEBI:29035"/>
    </ligand>
</feature>
<feature type="binding site" evidence="2">
    <location>
        <position position="173"/>
    </location>
    <ligand>
        <name>Mn(2+)</name>
        <dbReference type="ChEBI" id="CHEBI:29035"/>
    </ligand>
</feature>
<feature type="binding site" evidence="2">
    <location>
        <position position="175"/>
    </location>
    <ligand>
        <name>Mn(2+)</name>
        <dbReference type="ChEBI" id="CHEBI:29035"/>
    </ligand>
</feature>
<feature type="binding site" evidence="2">
    <location>
        <position position="414"/>
    </location>
    <ligand>
        <name>dolichyl diphosphooligosaccharide</name>
        <dbReference type="ChEBI" id="CHEBI:57570"/>
    </ligand>
</feature>
<feature type="binding site" evidence="2">
    <location>
        <position position="597"/>
    </location>
    <ligand>
        <name>dolichyl diphosphooligosaccharide</name>
        <dbReference type="ChEBI" id="CHEBI:57570"/>
    </ligand>
</feature>
<feature type="site" description="Interacts with target acceptor peptide in protein substrate" evidence="2">
    <location>
        <position position="55"/>
    </location>
</feature>
<feature type="site" description="Important for catalytic activity" evidence="2">
    <location>
        <position position="166"/>
    </location>
</feature>
<feature type="site" description="Interacts with target acceptor peptide in protein substrate" evidence="2">
    <location>
        <position position="360"/>
    </location>
</feature>
<feature type="site" description="Interacts with target acceptor peptide in protein substrate" evidence="2">
    <location>
        <position position="662"/>
    </location>
</feature>
<feature type="glycosylation site" description="N-linked (GlcNAc...) asparagine" evidence="7">
    <location>
        <position position="604"/>
    </location>
</feature>
<feature type="glycosylation site" description="N-linked (GlcNAc...) asparagine" evidence="7">
    <location>
        <position position="611"/>
    </location>
</feature>
<feature type="glycosylation site" description="N-linked (GlcNAc...) (high mannose) asparagine" evidence="3">
    <location>
        <position position="615"/>
    </location>
</feature>
<reference key="1">
    <citation type="journal article" date="2005" name="Mol. Genet. Genomics">
        <title>A fine physical map of the rice chromosome 5.</title>
        <authorList>
            <person name="Cheng C.-H."/>
            <person name="Chung M.C."/>
            <person name="Liu S.-M."/>
            <person name="Chen S.-K."/>
            <person name="Kao F.Y."/>
            <person name="Lin S.-J."/>
            <person name="Hsiao S.-H."/>
            <person name="Tseng I.C."/>
            <person name="Hsing Y.-I.C."/>
            <person name="Wu H.-P."/>
            <person name="Chen C.-S."/>
            <person name="Shaw J.-F."/>
            <person name="Wu J."/>
            <person name="Matsumoto T."/>
            <person name="Sasaki T."/>
            <person name="Chen H.-C."/>
            <person name="Chow T.-Y."/>
        </authorList>
    </citation>
    <scope>NUCLEOTIDE SEQUENCE [LARGE SCALE GENOMIC DNA]</scope>
    <source>
        <strain>cv. Nipponbare</strain>
    </source>
</reference>
<reference key="2">
    <citation type="journal article" date="2005" name="Nature">
        <title>The map-based sequence of the rice genome.</title>
        <authorList>
            <consortium name="International rice genome sequencing project (IRGSP)"/>
        </authorList>
    </citation>
    <scope>NUCLEOTIDE SEQUENCE [LARGE SCALE GENOMIC DNA]</scope>
    <source>
        <strain>cv. Nipponbare</strain>
    </source>
</reference>
<reference key="3">
    <citation type="journal article" date="2008" name="Nucleic Acids Res.">
        <title>The rice annotation project database (RAP-DB): 2008 update.</title>
        <authorList>
            <consortium name="The rice annotation project (RAP)"/>
        </authorList>
    </citation>
    <scope>GENOME REANNOTATION</scope>
    <source>
        <strain>cv. Nipponbare</strain>
    </source>
</reference>
<reference key="4">
    <citation type="journal article" date="2013" name="Rice">
        <title>Improvement of the Oryza sativa Nipponbare reference genome using next generation sequence and optical map data.</title>
        <authorList>
            <person name="Kawahara Y."/>
            <person name="de la Bastide M."/>
            <person name="Hamilton J.P."/>
            <person name="Kanamori H."/>
            <person name="McCombie W.R."/>
            <person name="Ouyang S."/>
            <person name="Schwartz D.C."/>
            <person name="Tanaka T."/>
            <person name="Wu J."/>
            <person name="Zhou S."/>
            <person name="Childs K.L."/>
            <person name="Davidson R.M."/>
            <person name="Lin H."/>
            <person name="Quesada-Ocampo L."/>
            <person name="Vaillancourt B."/>
            <person name="Sakai H."/>
            <person name="Lee S.S."/>
            <person name="Kim J."/>
            <person name="Numa H."/>
            <person name="Itoh T."/>
            <person name="Buell C.R."/>
            <person name="Matsumoto T."/>
        </authorList>
    </citation>
    <scope>GENOME REANNOTATION</scope>
    <source>
        <strain>cv. Nipponbare</strain>
    </source>
</reference>
<reference key="5">
    <citation type="journal article" date="2005" name="PLoS Biol.">
        <title>The genomes of Oryza sativa: a history of duplications.</title>
        <authorList>
            <person name="Yu J."/>
            <person name="Wang J."/>
            <person name="Lin W."/>
            <person name="Li S."/>
            <person name="Li H."/>
            <person name="Zhou J."/>
            <person name="Ni P."/>
            <person name="Dong W."/>
            <person name="Hu S."/>
            <person name="Zeng C."/>
            <person name="Zhang J."/>
            <person name="Zhang Y."/>
            <person name="Li R."/>
            <person name="Xu Z."/>
            <person name="Li S."/>
            <person name="Li X."/>
            <person name="Zheng H."/>
            <person name="Cong L."/>
            <person name="Lin L."/>
            <person name="Yin J."/>
            <person name="Geng J."/>
            <person name="Li G."/>
            <person name="Shi J."/>
            <person name="Liu J."/>
            <person name="Lv H."/>
            <person name="Li J."/>
            <person name="Wang J."/>
            <person name="Deng Y."/>
            <person name="Ran L."/>
            <person name="Shi X."/>
            <person name="Wang X."/>
            <person name="Wu Q."/>
            <person name="Li C."/>
            <person name="Ren X."/>
            <person name="Wang J."/>
            <person name="Wang X."/>
            <person name="Li D."/>
            <person name="Liu D."/>
            <person name="Zhang X."/>
            <person name="Ji Z."/>
            <person name="Zhao W."/>
            <person name="Sun Y."/>
            <person name="Zhang Z."/>
            <person name="Bao J."/>
            <person name="Han Y."/>
            <person name="Dong L."/>
            <person name="Ji J."/>
            <person name="Chen P."/>
            <person name="Wu S."/>
            <person name="Liu J."/>
            <person name="Xiao Y."/>
            <person name="Bu D."/>
            <person name="Tan J."/>
            <person name="Yang L."/>
            <person name="Ye C."/>
            <person name="Zhang J."/>
            <person name="Xu J."/>
            <person name="Zhou Y."/>
            <person name="Yu Y."/>
            <person name="Zhang B."/>
            <person name="Zhuang S."/>
            <person name="Wei H."/>
            <person name="Liu B."/>
            <person name="Lei M."/>
            <person name="Yu H."/>
            <person name="Li Y."/>
            <person name="Xu H."/>
            <person name="Wei S."/>
            <person name="He X."/>
            <person name="Fang L."/>
            <person name="Zhang Z."/>
            <person name="Zhang Y."/>
            <person name="Huang X."/>
            <person name="Su Z."/>
            <person name="Tong W."/>
            <person name="Li J."/>
            <person name="Tong Z."/>
            <person name="Li S."/>
            <person name="Ye J."/>
            <person name="Wang L."/>
            <person name="Fang L."/>
            <person name="Lei T."/>
            <person name="Chen C.-S."/>
            <person name="Chen H.-C."/>
            <person name="Xu Z."/>
            <person name="Li H."/>
            <person name="Huang H."/>
            <person name="Zhang F."/>
            <person name="Xu H."/>
            <person name="Li N."/>
            <person name="Zhao C."/>
            <person name="Li S."/>
            <person name="Dong L."/>
            <person name="Huang Y."/>
            <person name="Li L."/>
            <person name="Xi Y."/>
            <person name="Qi Q."/>
            <person name="Li W."/>
            <person name="Zhang B."/>
            <person name="Hu W."/>
            <person name="Zhang Y."/>
            <person name="Tian X."/>
            <person name="Jiao Y."/>
            <person name="Liang X."/>
            <person name="Jin J."/>
            <person name="Gao L."/>
            <person name="Zheng W."/>
            <person name="Hao B."/>
            <person name="Liu S.-M."/>
            <person name="Wang W."/>
            <person name="Yuan L."/>
            <person name="Cao M."/>
            <person name="McDermott J."/>
            <person name="Samudrala R."/>
            <person name="Wang J."/>
            <person name="Wong G.K.-S."/>
            <person name="Yang H."/>
        </authorList>
    </citation>
    <scope>NUCLEOTIDE SEQUENCE [LARGE SCALE GENOMIC DNA]</scope>
    <source>
        <strain>cv. Nipponbare</strain>
    </source>
</reference>
<reference key="6">
    <citation type="journal article" date="2003" name="Science">
        <title>Collection, mapping, and annotation of over 28,000 cDNA clones from japonica rice.</title>
        <authorList>
            <consortium name="The rice full-length cDNA consortium"/>
        </authorList>
    </citation>
    <scope>NUCLEOTIDE SEQUENCE [LARGE SCALE MRNA]</scope>
    <source>
        <strain>cv. Nipponbare</strain>
    </source>
</reference>
<evidence type="ECO:0000250" key="1"/>
<evidence type="ECO:0000250" key="2">
    <source>
        <dbReference type="UniProtKB" id="B9KDD4"/>
    </source>
</evidence>
<evidence type="ECO:0000250" key="3">
    <source>
        <dbReference type="UniProtKB" id="P39007"/>
    </source>
</evidence>
<evidence type="ECO:0000250" key="4">
    <source>
        <dbReference type="UniProtKB" id="Q5HTX9"/>
    </source>
</evidence>
<evidence type="ECO:0000250" key="5">
    <source>
        <dbReference type="UniProtKB" id="Q93ZY3"/>
    </source>
</evidence>
<evidence type="ECO:0000255" key="6"/>
<evidence type="ECO:0000255" key="7">
    <source>
        <dbReference type="PROSITE-ProRule" id="PRU00498"/>
    </source>
</evidence>
<evidence type="ECO:0000256" key="8">
    <source>
        <dbReference type="SAM" id="MobiDB-lite"/>
    </source>
</evidence>
<evidence type="ECO:0000305" key="9"/>
<comment type="function">
    <text evidence="3">Catalytic subunit of the oligosaccharyl transferase (OST) complex that catalyzes the initial transfer of a defined glycan (Glc(3)Man(9)GlcNAc(2) in eukaryotes) from the lipid carrier dolichol-pyrophosphate to an asparagine residue within an Asn-X-Ser/Thr consensus motif in nascent polypeptide chains, the first step in protein N-glycosylation. N-glycosylation occurs cotranslationally and the complex associates with the Sec61 complex at the channel-forming translocon complex that mediates protein translocation across the endoplasmic reticulum (ER). All subunits are required for a maximal enzyme activity. This subunit contains the active site and the acceptor peptide and donor lipid-linked oligosaccharide (LLO) binding pockets.</text>
</comment>
<comment type="catalytic activity">
    <reaction evidence="3">
        <text>a di-trans,poly-cis-dolichyl diphosphooligosaccharide + L-asparaginyl-[protein] = N(4)-(oligosaccharide-(1-&gt;4)-N-acetyl-beta-D-glucosaminyl-(1-&gt;4)-N-acetyl-beta-D-glucosaminyl)-L-asparaginyl-[protein] + a di-trans,poly-cis-dolichyl diphosphate + H(+)</text>
        <dbReference type="Rhea" id="RHEA:22980"/>
        <dbReference type="Rhea" id="RHEA-COMP:12804"/>
        <dbReference type="Rhea" id="RHEA-COMP:12805"/>
        <dbReference type="Rhea" id="RHEA-COMP:19506"/>
        <dbReference type="Rhea" id="RHEA-COMP:19509"/>
        <dbReference type="ChEBI" id="CHEBI:15378"/>
        <dbReference type="ChEBI" id="CHEBI:50347"/>
        <dbReference type="ChEBI" id="CHEBI:57497"/>
        <dbReference type="ChEBI" id="CHEBI:57570"/>
        <dbReference type="ChEBI" id="CHEBI:132529"/>
        <dbReference type="EC" id="2.4.99.18"/>
    </reaction>
</comment>
<comment type="cofactor">
    <cofactor evidence="2">
        <name>Mg(2+)</name>
        <dbReference type="ChEBI" id="CHEBI:18420"/>
    </cofactor>
    <cofactor evidence="2">
        <name>Mn(2+)</name>
        <dbReference type="ChEBI" id="CHEBI:29035"/>
    </cofactor>
</comment>
<comment type="pathway">
    <text evidence="3">Protein modification; protein glycosylation.</text>
</comment>
<comment type="subunit">
    <text evidence="1">Component of the oligosaccharyltransferase (OST) complex.</text>
</comment>
<comment type="subcellular location">
    <subcellularLocation>
        <location evidence="5">Endoplasmic reticulum membrane</location>
        <topology evidence="5">Multi-pass membrane protein</topology>
    </subcellularLocation>
</comment>
<comment type="domain">
    <text evidence="3">Despite low primary sequence conservation between eukaryotic catalytic subunits and bacterial and archaeal single subunit OSTs (ssOST), structural comparison revealed several common motifs at spatially equivalent positions, like the DXD motif 1 on the external loop 1 and the DXD motif 2 on the external loop 2 involved in binding of the metal ion cofactor and the carboxamide group of the acceptor asparagine, the conserved Glu residue of the TIXE/SVSE motif on the external loop 5 involved in catalysis, as well as the WWDYG and the DK/MI motifs in the globular domain that define the binding pocket for the +2 Ser/Thr of the acceptor sequon. In bacterial ssOSTs, an Arg residue was found to interact with a negatively charged side chain at the -2 position of the sequon. This Arg is conserved in bacterial enzymes and correlates with an extended sequon requirement (Asp-X-Asn-X-Ser/Thr) for bacterial N-glycosylation.</text>
</comment>
<comment type="similarity">
    <text evidence="9">Belongs to the STT3 family.</text>
</comment>
<name>STT3A_ORYSJ</name>
<dbReference type="EC" id="2.4.99.18"/>
<dbReference type="EMBL" id="AC130611">
    <property type="protein sequence ID" value="AAT69659.1"/>
    <property type="molecule type" value="Genomic_DNA"/>
</dbReference>
<dbReference type="EMBL" id="AC132491">
    <property type="protein sequence ID" value="AAU44267.1"/>
    <property type="molecule type" value="Genomic_DNA"/>
</dbReference>
<dbReference type="EMBL" id="AP008211">
    <property type="protein sequence ID" value="BAF17982.1"/>
    <property type="molecule type" value="Genomic_DNA"/>
</dbReference>
<dbReference type="EMBL" id="AP014961">
    <property type="status" value="NOT_ANNOTATED_CDS"/>
    <property type="molecule type" value="Genomic_DNA"/>
</dbReference>
<dbReference type="EMBL" id="CM000142">
    <property type="protein sequence ID" value="EEE64392.1"/>
    <property type="molecule type" value="Genomic_DNA"/>
</dbReference>
<dbReference type="EMBL" id="AK067224">
    <property type="protein sequence ID" value="BAG90322.1"/>
    <property type="molecule type" value="mRNA"/>
</dbReference>
<dbReference type="RefSeq" id="XP_015639423.1">
    <property type="nucleotide sequence ID" value="XM_015783937.1"/>
</dbReference>
<dbReference type="SMR" id="Q6F2Z1"/>
<dbReference type="FunCoup" id="Q6F2Z1">
    <property type="interactions" value="1290"/>
</dbReference>
<dbReference type="STRING" id="39947.Q6F2Z1"/>
<dbReference type="CAZy" id="GT66">
    <property type="family name" value="Glycosyltransferase Family 66"/>
</dbReference>
<dbReference type="GlyCosmos" id="Q6F2Z1">
    <property type="glycosylation" value="3 sites, No reported glycans"/>
</dbReference>
<dbReference type="PaxDb" id="39947-Q6F2Z1"/>
<dbReference type="KEGG" id="dosa:Os05g0519900"/>
<dbReference type="eggNOG" id="KOG2292">
    <property type="taxonomic scope" value="Eukaryota"/>
</dbReference>
<dbReference type="HOGENOM" id="CLU_009279_1_0_1"/>
<dbReference type="InParanoid" id="Q6F2Z1"/>
<dbReference type="OrthoDB" id="10261066at2759"/>
<dbReference type="UniPathway" id="UPA00378"/>
<dbReference type="Proteomes" id="UP000000763">
    <property type="component" value="Chromosome 5"/>
</dbReference>
<dbReference type="Proteomes" id="UP000007752">
    <property type="component" value="Chromosome 5"/>
</dbReference>
<dbReference type="Proteomes" id="UP000059680">
    <property type="component" value="Chromosome 5"/>
</dbReference>
<dbReference type="GO" id="GO:0005789">
    <property type="term" value="C:endoplasmic reticulum membrane"/>
    <property type="evidence" value="ECO:0007669"/>
    <property type="project" value="UniProtKB-SubCell"/>
</dbReference>
<dbReference type="GO" id="GO:0004579">
    <property type="term" value="F:dolichyl-diphosphooligosaccharide-protein glycotransferase activity"/>
    <property type="evidence" value="ECO:0007669"/>
    <property type="project" value="UniProtKB-EC"/>
</dbReference>
<dbReference type="GO" id="GO:0046872">
    <property type="term" value="F:metal ion binding"/>
    <property type="evidence" value="ECO:0007669"/>
    <property type="project" value="UniProtKB-KW"/>
</dbReference>
<dbReference type="GO" id="GO:0006486">
    <property type="term" value="P:protein glycosylation"/>
    <property type="evidence" value="ECO:0007669"/>
    <property type="project" value="UniProtKB-UniPathway"/>
</dbReference>
<dbReference type="FunFam" id="3.40.50.12610:FF:000002">
    <property type="entry name" value="dolichyl-diphosphooligosaccharide--protein glycosyltransferase subunit STT3A"/>
    <property type="match status" value="1"/>
</dbReference>
<dbReference type="Gene3D" id="3.40.50.12610">
    <property type="match status" value="1"/>
</dbReference>
<dbReference type="InterPro" id="IPR003674">
    <property type="entry name" value="Oligo_trans_STT3"/>
</dbReference>
<dbReference type="InterPro" id="IPR048999">
    <property type="entry name" value="STT3-PglB_core"/>
</dbReference>
<dbReference type="InterPro" id="IPR048307">
    <property type="entry name" value="STT3_N"/>
</dbReference>
<dbReference type="PANTHER" id="PTHR13872">
    <property type="entry name" value="DOLICHYL-DIPHOSPHOOLIGOSACCHARIDE--PROTEIN GLYCOSYLTRANSFERASE SUBUNIT"/>
    <property type="match status" value="1"/>
</dbReference>
<dbReference type="PANTHER" id="PTHR13872:SF48">
    <property type="entry name" value="DOLICHYL-DIPHOSPHOOLIGOSACCHARIDE--PROTEIN GLYCOSYLTRANSFERASE SUBUNIT STT3A"/>
    <property type="match status" value="1"/>
</dbReference>
<dbReference type="Pfam" id="PF02516">
    <property type="entry name" value="STT3"/>
    <property type="match status" value="1"/>
</dbReference>
<dbReference type="Pfam" id="PF21436">
    <property type="entry name" value="STT3-PglB_core"/>
    <property type="match status" value="1"/>
</dbReference>
<sequence length="787" mass="87014">MAEPESSTAAAGGSRLRNACGGVLCAFTLLLIGVLAFSIRLFSVIKYESVIHEFDPYFNFRVTQFLSKNGIYEFWNWFDDRTWYPLGRVIGGTVYPGLTLTAGTIWWLLNSLNIPLSVETVCVFTAPIFSANASWATYLLTKEAKGTGAGLMAAAILAMVPSYISRSVAGSYDNEAVAIFALIFTFYLYVKTLNTGSLFYATLNALSYFYMVCSWGGYTFIINLIPIHVLLCIVTGRYSSRLYIAYAPLVILGTLLAALVPVVGFNAVMTSEHFASFLVFIILHVVALVYYIKGLLTPRLFKVAMTLVITVGLAVCFAVIAILIALVASSPTKGWSGRSLSLLDPTYASKYIPIIASVSEHQPPTWPSYFMDINVLAFLIPAGIISCFLPLSDASSFVVLYLVTAVYFSGVMVRLMLVLAPAACILSGIALSEAFDVLTRSVKYQLSKLFDDSPAASGDSSAESSSASTVSTNSAKNETRPEKTETAPKEKPSKKNRKKEKEVAESVPVKPKKEKKLLVLPMEASVLGILLLIVLGGFYVVHCVWAAAEAYSAPSIVLTSRSRDGLHVFDDFREAYAWLSHNTDVDDKVASWWDYGYQTTAMANRTVIVDNNTWNNTHIATVGTAMSSPEKAAWEIFNSLDVKYVLVVFGGLVGYPSDDINKFLWMVRIGGGVFPHIKEPDYLRDGNYRVDAQGTPTMLNCLMYKLCYYRFVETDGKGFDRVRGYEIGKKHFKLTHFEEVFTTHHWMVRIYKLKPQKNRVRGKLKKLKSGSKASSTNAAGRKKNPWQ</sequence>
<accession>Q6F2Z1</accession>